<protein>
    <recommendedName>
        <fullName evidence="1">ATP-dependent Clp protease proteolytic subunit</fullName>
        <ecNumber evidence="1">3.4.21.92</ecNumber>
    </recommendedName>
    <alternativeName>
        <fullName evidence="1">Endopeptidase Clp</fullName>
    </alternativeName>
</protein>
<accession>Q1CT76</accession>
<evidence type="ECO:0000255" key="1">
    <source>
        <dbReference type="HAMAP-Rule" id="MF_00444"/>
    </source>
</evidence>
<evidence type="ECO:0000305" key="2"/>
<dbReference type="EC" id="3.4.21.92" evidence="1"/>
<dbReference type="EMBL" id="CP000241">
    <property type="protein sequence ID" value="ABF84846.1"/>
    <property type="status" value="ALT_INIT"/>
    <property type="molecule type" value="Genomic_DNA"/>
</dbReference>
<dbReference type="RefSeq" id="WP_000540573.1">
    <property type="nucleotide sequence ID" value="NC_008086.1"/>
</dbReference>
<dbReference type="SMR" id="Q1CT76"/>
<dbReference type="MEROPS" id="S14.001"/>
<dbReference type="KEGG" id="hpa:HPAG1_0779"/>
<dbReference type="HOGENOM" id="CLU_058707_3_2_7"/>
<dbReference type="GO" id="GO:0005737">
    <property type="term" value="C:cytoplasm"/>
    <property type="evidence" value="ECO:0007669"/>
    <property type="project" value="UniProtKB-SubCell"/>
</dbReference>
<dbReference type="GO" id="GO:0009368">
    <property type="term" value="C:endopeptidase Clp complex"/>
    <property type="evidence" value="ECO:0007669"/>
    <property type="project" value="TreeGrafter"/>
</dbReference>
<dbReference type="GO" id="GO:0004176">
    <property type="term" value="F:ATP-dependent peptidase activity"/>
    <property type="evidence" value="ECO:0007669"/>
    <property type="project" value="InterPro"/>
</dbReference>
<dbReference type="GO" id="GO:0051117">
    <property type="term" value="F:ATPase binding"/>
    <property type="evidence" value="ECO:0007669"/>
    <property type="project" value="TreeGrafter"/>
</dbReference>
<dbReference type="GO" id="GO:0004252">
    <property type="term" value="F:serine-type endopeptidase activity"/>
    <property type="evidence" value="ECO:0007669"/>
    <property type="project" value="UniProtKB-UniRule"/>
</dbReference>
<dbReference type="GO" id="GO:0006515">
    <property type="term" value="P:protein quality control for misfolded or incompletely synthesized proteins"/>
    <property type="evidence" value="ECO:0007669"/>
    <property type="project" value="TreeGrafter"/>
</dbReference>
<dbReference type="CDD" id="cd07017">
    <property type="entry name" value="S14_ClpP_2"/>
    <property type="match status" value="1"/>
</dbReference>
<dbReference type="FunFam" id="3.90.226.10:FF:000001">
    <property type="entry name" value="ATP-dependent Clp protease proteolytic subunit"/>
    <property type="match status" value="1"/>
</dbReference>
<dbReference type="Gene3D" id="3.90.226.10">
    <property type="entry name" value="2-enoyl-CoA Hydratase, Chain A, domain 1"/>
    <property type="match status" value="1"/>
</dbReference>
<dbReference type="HAMAP" id="MF_00444">
    <property type="entry name" value="ClpP"/>
    <property type="match status" value="1"/>
</dbReference>
<dbReference type="InterPro" id="IPR001907">
    <property type="entry name" value="ClpP"/>
</dbReference>
<dbReference type="InterPro" id="IPR029045">
    <property type="entry name" value="ClpP/crotonase-like_dom_sf"/>
</dbReference>
<dbReference type="InterPro" id="IPR023562">
    <property type="entry name" value="ClpP/TepA"/>
</dbReference>
<dbReference type="InterPro" id="IPR033135">
    <property type="entry name" value="ClpP_His_AS"/>
</dbReference>
<dbReference type="InterPro" id="IPR018215">
    <property type="entry name" value="ClpP_Ser_AS"/>
</dbReference>
<dbReference type="NCBIfam" id="TIGR00493">
    <property type="entry name" value="clpP"/>
    <property type="match status" value="1"/>
</dbReference>
<dbReference type="NCBIfam" id="NF001368">
    <property type="entry name" value="PRK00277.1"/>
    <property type="match status" value="1"/>
</dbReference>
<dbReference type="NCBIfam" id="NF009205">
    <property type="entry name" value="PRK12553.1"/>
    <property type="match status" value="1"/>
</dbReference>
<dbReference type="PANTHER" id="PTHR10381">
    <property type="entry name" value="ATP-DEPENDENT CLP PROTEASE PROTEOLYTIC SUBUNIT"/>
    <property type="match status" value="1"/>
</dbReference>
<dbReference type="PANTHER" id="PTHR10381:SF70">
    <property type="entry name" value="ATP-DEPENDENT CLP PROTEASE PROTEOLYTIC SUBUNIT"/>
    <property type="match status" value="1"/>
</dbReference>
<dbReference type="Pfam" id="PF00574">
    <property type="entry name" value="CLP_protease"/>
    <property type="match status" value="1"/>
</dbReference>
<dbReference type="PRINTS" id="PR00127">
    <property type="entry name" value="CLPPROTEASEP"/>
</dbReference>
<dbReference type="SUPFAM" id="SSF52096">
    <property type="entry name" value="ClpP/crotonase"/>
    <property type="match status" value="1"/>
</dbReference>
<dbReference type="PROSITE" id="PS00382">
    <property type="entry name" value="CLP_PROTEASE_HIS"/>
    <property type="match status" value="1"/>
</dbReference>
<dbReference type="PROSITE" id="PS00381">
    <property type="entry name" value="CLP_PROTEASE_SER"/>
    <property type="match status" value="1"/>
</dbReference>
<reference key="1">
    <citation type="journal article" date="2006" name="Proc. Natl. Acad. Sci. U.S.A.">
        <title>The complete genome sequence of a chronic atrophic gastritis Helicobacter pylori strain: evolution during disease progression.</title>
        <authorList>
            <person name="Oh J.D."/>
            <person name="Kling-Baeckhed H."/>
            <person name="Giannakis M."/>
            <person name="Xu J."/>
            <person name="Fulton R.S."/>
            <person name="Fulton L.A."/>
            <person name="Cordum H.S."/>
            <person name="Wang C."/>
            <person name="Elliott G."/>
            <person name="Edwards J."/>
            <person name="Mardis E.R."/>
            <person name="Engstrand L.G."/>
            <person name="Gordon J.I."/>
        </authorList>
    </citation>
    <scope>NUCLEOTIDE SEQUENCE [LARGE SCALE GENOMIC DNA]</scope>
    <source>
        <strain>HPAG1</strain>
    </source>
</reference>
<organism>
    <name type="scientific">Helicobacter pylori (strain HPAG1)</name>
    <dbReference type="NCBI Taxonomy" id="357544"/>
    <lineage>
        <taxon>Bacteria</taxon>
        <taxon>Pseudomonadati</taxon>
        <taxon>Campylobacterota</taxon>
        <taxon>Epsilonproteobacteria</taxon>
        <taxon>Campylobacterales</taxon>
        <taxon>Helicobacteraceae</taxon>
        <taxon>Helicobacter</taxon>
    </lineage>
</organism>
<keyword id="KW-0963">Cytoplasm</keyword>
<keyword id="KW-0378">Hydrolase</keyword>
<keyword id="KW-0645">Protease</keyword>
<keyword id="KW-0720">Serine protease</keyword>
<gene>
    <name evidence="1" type="primary">clpP</name>
    <name type="ordered locus">HPAG1_0779</name>
</gene>
<feature type="chain" id="PRO_0000252820" description="ATP-dependent Clp protease proteolytic subunit">
    <location>
        <begin position="1"/>
        <end position="195"/>
    </location>
</feature>
<feature type="active site" description="Nucleophile" evidence="1">
    <location>
        <position position="98"/>
    </location>
</feature>
<feature type="active site" evidence="1">
    <location>
        <position position="123"/>
    </location>
</feature>
<proteinExistence type="inferred from homology"/>
<comment type="function">
    <text evidence="1">Cleaves peptides in various proteins in a process that requires ATP hydrolysis. Has a chymotrypsin-like activity. Plays a major role in the degradation of misfolded proteins.</text>
</comment>
<comment type="catalytic activity">
    <reaction evidence="1">
        <text>Hydrolysis of proteins to small peptides in the presence of ATP and magnesium. alpha-casein is the usual test substrate. In the absence of ATP, only oligopeptides shorter than five residues are hydrolyzed (such as succinyl-Leu-Tyr-|-NHMec, and Leu-Tyr-Leu-|-Tyr-Trp, in which cleavage of the -Tyr-|-Leu- and -Tyr-|-Trp bonds also occurs).</text>
        <dbReference type="EC" id="3.4.21.92"/>
    </reaction>
</comment>
<comment type="subunit">
    <text evidence="1">Fourteen ClpP subunits assemble into 2 heptameric rings which stack back to back to give a disk-like structure with a central cavity, resembling the structure of eukaryotic proteasomes.</text>
</comment>
<comment type="subcellular location">
    <subcellularLocation>
        <location evidence="1">Cytoplasm</location>
    </subcellularLocation>
</comment>
<comment type="similarity">
    <text evidence="1">Belongs to the peptidase S14 family.</text>
</comment>
<comment type="sequence caution" evidence="2">
    <conflict type="erroneous initiation">
        <sequence resource="EMBL-CDS" id="ABF84846"/>
    </conflict>
</comment>
<name>CLPP_HELPH</name>
<sequence>MGYIPYVIENTDRGERSYDIYSRLLKDRIVLLSGEINDSVASSIVAQLLFLEAEDPEKDIGLYINSPGGVITSGLSIYDTMNFIRPDVSTICIGQAASMGAFLLSCGAKGKRFSLPHSRIMIHQPLGGAQGQASDIEIISNEILRLKGLMNSILAQNSGQSLEQIAKDTDRDFYMSAKEAKEYGLIDKVLQKNVK</sequence>